<name>NFUA_XYLFA</name>
<comment type="function">
    <text evidence="1">Involved in iron-sulfur cluster biogenesis. Binds a 4Fe-4S cluster, can transfer this cluster to apoproteins, and thereby intervenes in the maturation of Fe/S proteins. Could also act as a scaffold/chaperone for damaged Fe/S proteins.</text>
</comment>
<comment type="cofactor">
    <cofactor evidence="1">
        <name>[4Fe-4S] cluster</name>
        <dbReference type="ChEBI" id="CHEBI:49883"/>
    </cofactor>
    <text evidence="1">Binds 1 [4Fe-4S] cluster per subunit. The cluster is presumably bound at the interface of two monomers.</text>
</comment>
<comment type="subunit">
    <text evidence="1">Homodimer.</text>
</comment>
<comment type="similarity">
    <text evidence="1">Belongs to the NfuA family.</text>
</comment>
<comment type="sequence caution" evidence="2">
    <conflict type="erroneous initiation">
        <sequence resource="EMBL-CDS" id="AAF85400"/>
    </conflict>
</comment>
<reference key="1">
    <citation type="journal article" date="2000" name="Nature">
        <title>The genome sequence of the plant pathogen Xylella fastidiosa.</title>
        <authorList>
            <person name="Simpson A.J.G."/>
            <person name="Reinach F.C."/>
            <person name="Arruda P."/>
            <person name="Abreu F.A."/>
            <person name="Acencio M."/>
            <person name="Alvarenga R."/>
            <person name="Alves L.M.C."/>
            <person name="Araya J.E."/>
            <person name="Baia G.S."/>
            <person name="Baptista C.S."/>
            <person name="Barros M.H."/>
            <person name="Bonaccorsi E.D."/>
            <person name="Bordin S."/>
            <person name="Bove J.M."/>
            <person name="Briones M.R.S."/>
            <person name="Bueno M.R.P."/>
            <person name="Camargo A.A."/>
            <person name="Camargo L.E.A."/>
            <person name="Carraro D.M."/>
            <person name="Carrer H."/>
            <person name="Colauto N.B."/>
            <person name="Colombo C."/>
            <person name="Costa F.F."/>
            <person name="Costa M.C.R."/>
            <person name="Costa-Neto C.M."/>
            <person name="Coutinho L.L."/>
            <person name="Cristofani M."/>
            <person name="Dias-Neto E."/>
            <person name="Docena C."/>
            <person name="El-Dorry H."/>
            <person name="Facincani A.P."/>
            <person name="Ferreira A.J.S."/>
            <person name="Ferreira V.C.A."/>
            <person name="Ferro J.A."/>
            <person name="Fraga J.S."/>
            <person name="Franca S.C."/>
            <person name="Franco M.C."/>
            <person name="Frohme M."/>
            <person name="Furlan L.R."/>
            <person name="Garnier M."/>
            <person name="Goldman G.H."/>
            <person name="Goldman M.H.S."/>
            <person name="Gomes S.L."/>
            <person name="Gruber A."/>
            <person name="Ho P.L."/>
            <person name="Hoheisel J.D."/>
            <person name="Junqueira M.L."/>
            <person name="Kemper E.L."/>
            <person name="Kitajima J.P."/>
            <person name="Krieger J.E."/>
            <person name="Kuramae E.E."/>
            <person name="Laigret F."/>
            <person name="Lambais M.R."/>
            <person name="Leite L.C.C."/>
            <person name="Lemos E.G.M."/>
            <person name="Lemos M.V.F."/>
            <person name="Lopes S.A."/>
            <person name="Lopes C.R."/>
            <person name="Machado J.A."/>
            <person name="Machado M.A."/>
            <person name="Madeira A.M.B.N."/>
            <person name="Madeira H.M.F."/>
            <person name="Marino C.L."/>
            <person name="Marques M.V."/>
            <person name="Martins E.A.L."/>
            <person name="Martins E.M.F."/>
            <person name="Matsukuma A.Y."/>
            <person name="Menck C.F.M."/>
            <person name="Miracca E.C."/>
            <person name="Miyaki C.Y."/>
            <person name="Monteiro-Vitorello C.B."/>
            <person name="Moon D.H."/>
            <person name="Nagai M.A."/>
            <person name="Nascimento A.L.T.O."/>
            <person name="Netto L.E.S."/>
            <person name="Nhani A. Jr."/>
            <person name="Nobrega F.G."/>
            <person name="Nunes L.R."/>
            <person name="Oliveira M.A."/>
            <person name="de Oliveira M.C."/>
            <person name="de Oliveira R.C."/>
            <person name="Palmieri D.A."/>
            <person name="Paris A."/>
            <person name="Peixoto B.R."/>
            <person name="Pereira G.A.G."/>
            <person name="Pereira H.A. Jr."/>
            <person name="Pesquero J.B."/>
            <person name="Quaggio R.B."/>
            <person name="Roberto P.G."/>
            <person name="Rodrigues V."/>
            <person name="de Rosa A.J.M."/>
            <person name="de Rosa V.E. Jr."/>
            <person name="de Sa R.G."/>
            <person name="Santelli R.V."/>
            <person name="Sawasaki H.E."/>
            <person name="da Silva A.C.R."/>
            <person name="da Silva A.M."/>
            <person name="da Silva F.R."/>
            <person name="Silva W.A. Jr."/>
            <person name="da Silveira J.F."/>
            <person name="Silvestri M.L.Z."/>
            <person name="Siqueira W.J."/>
            <person name="de Souza A.A."/>
            <person name="de Souza A.P."/>
            <person name="Terenzi M.F."/>
            <person name="Truffi D."/>
            <person name="Tsai S.M."/>
            <person name="Tsuhako M.H."/>
            <person name="Vallada H."/>
            <person name="Van Sluys M.A."/>
            <person name="Verjovski-Almeida S."/>
            <person name="Vettore A.L."/>
            <person name="Zago M.A."/>
            <person name="Zatz M."/>
            <person name="Meidanis J."/>
            <person name="Setubal J.C."/>
        </authorList>
    </citation>
    <scope>NUCLEOTIDE SEQUENCE [LARGE SCALE GENOMIC DNA]</scope>
    <source>
        <strain>9a5c</strain>
    </source>
</reference>
<dbReference type="EMBL" id="AE003849">
    <property type="protein sequence ID" value="AAF85400.1"/>
    <property type="status" value="ALT_INIT"/>
    <property type="molecule type" value="Genomic_DNA"/>
</dbReference>
<dbReference type="PIR" id="F82537">
    <property type="entry name" value="F82537"/>
</dbReference>
<dbReference type="RefSeq" id="WP_023907085.1">
    <property type="nucleotide sequence ID" value="NC_002488.3"/>
</dbReference>
<dbReference type="SMR" id="Q9PAB5"/>
<dbReference type="STRING" id="160492.XF_2603"/>
<dbReference type="KEGG" id="xfa:XF_2603"/>
<dbReference type="eggNOG" id="COG0316">
    <property type="taxonomic scope" value="Bacteria"/>
</dbReference>
<dbReference type="eggNOG" id="COG0694">
    <property type="taxonomic scope" value="Bacteria"/>
</dbReference>
<dbReference type="HOGENOM" id="CLU_094569_0_0_6"/>
<dbReference type="Proteomes" id="UP000000812">
    <property type="component" value="Chromosome"/>
</dbReference>
<dbReference type="GO" id="GO:0051539">
    <property type="term" value="F:4 iron, 4 sulfur cluster binding"/>
    <property type="evidence" value="ECO:0007669"/>
    <property type="project" value="UniProtKB-UniRule"/>
</dbReference>
<dbReference type="GO" id="GO:0005506">
    <property type="term" value="F:iron ion binding"/>
    <property type="evidence" value="ECO:0007669"/>
    <property type="project" value="InterPro"/>
</dbReference>
<dbReference type="GO" id="GO:0016226">
    <property type="term" value="P:iron-sulfur cluster assembly"/>
    <property type="evidence" value="ECO:0007669"/>
    <property type="project" value="UniProtKB-UniRule"/>
</dbReference>
<dbReference type="GO" id="GO:0051604">
    <property type="term" value="P:protein maturation"/>
    <property type="evidence" value="ECO:0007669"/>
    <property type="project" value="UniProtKB-UniRule"/>
</dbReference>
<dbReference type="Gene3D" id="3.30.300.130">
    <property type="entry name" value="Fe-S cluster assembly (FSCA)"/>
    <property type="match status" value="1"/>
</dbReference>
<dbReference type="Gene3D" id="2.60.300.12">
    <property type="entry name" value="HesB-like domain"/>
    <property type="match status" value="1"/>
</dbReference>
<dbReference type="HAMAP" id="MF_01637">
    <property type="entry name" value="Fe_S_biogen_NfuA"/>
    <property type="match status" value="1"/>
</dbReference>
<dbReference type="InterPro" id="IPR017726">
    <property type="entry name" value="Fe/S_biogenesis_protein_NfuA"/>
</dbReference>
<dbReference type="InterPro" id="IPR034904">
    <property type="entry name" value="FSCA_dom_sf"/>
</dbReference>
<dbReference type="InterPro" id="IPR035903">
    <property type="entry name" value="HesB-like_dom_sf"/>
</dbReference>
<dbReference type="InterPro" id="IPR001075">
    <property type="entry name" value="NIF_FeS_clus_asmbl_NifU_C"/>
</dbReference>
<dbReference type="PANTHER" id="PTHR11178:SF51">
    <property type="entry name" value="FE_S BIOGENESIS PROTEIN NFUA"/>
    <property type="match status" value="1"/>
</dbReference>
<dbReference type="PANTHER" id="PTHR11178">
    <property type="entry name" value="IRON-SULFUR CLUSTER SCAFFOLD PROTEIN NFU-RELATED"/>
    <property type="match status" value="1"/>
</dbReference>
<dbReference type="Pfam" id="PF01106">
    <property type="entry name" value="NifU"/>
    <property type="match status" value="1"/>
</dbReference>
<dbReference type="SUPFAM" id="SSF117916">
    <property type="entry name" value="Fe-S cluster assembly (FSCA) domain-like"/>
    <property type="match status" value="1"/>
</dbReference>
<dbReference type="SUPFAM" id="SSF89360">
    <property type="entry name" value="HesB-like domain"/>
    <property type="match status" value="1"/>
</dbReference>
<organism>
    <name type="scientific">Xylella fastidiosa (strain 9a5c)</name>
    <dbReference type="NCBI Taxonomy" id="160492"/>
    <lineage>
        <taxon>Bacteria</taxon>
        <taxon>Pseudomonadati</taxon>
        <taxon>Pseudomonadota</taxon>
        <taxon>Gammaproteobacteria</taxon>
        <taxon>Lysobacterales</taxon>
        <taxon>Lysobacteraceae</taxon>
        <taxon>Xylella</taxon>
    </lineage>
</organism>
<gene>
    <name evidence="1" type="primary">nfuA</name>
    <name type="ordered locus">XF_2603</name>
</gene>
<sequence length="199" mass="21417">MIQISDRAKAHFLRLIQREGVPGMGVRLSAVDPGTARADARLEFAEPSELVGDEWLIDCGDFTLYVASASVAWLDSAEIDYVTQATGSQQLIIKAPKIKGQELSQVASLVERVCWVVENEINPQLASHGGRVEVQEVSAEGVVLLRFGGGCHGCGMVDVTLKQGVEKTLMERVHGVIAVRDATDHSTGAAPYISRNFAS</sequence>
<feature type="chain" id="PRO_0000209492" description="Fe/S biogenesis protein NfuA">
    <location>
        <begin position="1"/>
        <end position="199"/>
    </location>
</feature>
<feature type="binding site" evidence="1">
    <location>
        <position position="151"/>
    </location>
    <ligand>
        <name>[4Fe-4S] cluster</name>
        <dbReference type="ChEBI" id="CHEBI:49883"/>
    </ligand>
</feature>
<feature type="binding site" evidence="1">
    <location>
        <position position="154"/>
    </location>
    <ligand>
        <name>[4Fe-4S] cluster</name>
        <dbReference type="ChEBI" id="CHEBI:49883"/>
    </ligand>
</feature>
<evidence type="ECO:0000255" key="1">
    <source>
        <dbReference type="HAMAP-Rule" id="MF_01637"/>
    </source>
</evidence>
<evidence type="ECO:0000305" key="2"/>
<keyword id="KW-0004">4Fe-4S</keyword>
<keyword id="KW-0408">Iron</keyword>
<keyword id="KW-0411">Iron-sulfur</keyword>
<keyword id="KW-0479">Metal-binding</keyword>
<accession>Q9PAB5</accession>
<proteinExistence type="inferred from homology"/>
<protein>
    <recommendedName>
        <fullName evidence="1">Fe/S biogenesis protein NfuA</fullName>
    </recommendedName>
</protein>